<evidence type="ECO:0000250" key="1"/>
<evidence type="ECO:0000255" key="2"/>
<evidence type="ECO:0000305" key="3"/>
<protein>
    <recommendedName>
        <fullName>Flagellar P-ring protein 2</fullName>
    </recommendedName>
    <alternativeName>
        <fullName>Basal body P-ring protein 2</fullName>
    </alternativeName>
</protein>
<name>FLGI2_VIBPA</name>
<gene>
    <name type="primary">flgI2</name>
    <name type="ordered locus">VP0783</name>
</gene>
<organism>
    <name type="scientific">Vibrio parahaemolyticus serotype O3:K6 (strain RIMD 2210633)</name>
    <dbReference type="NCBI Taxonomy" id="223926"/>
    <lineage>
        <taxon>Bacteria</taxon>
        <taxon>Pseudomonadati</taxon>
        <taxon>Pseudomonadota</taxon>
        <taxon>Gammaproteobacteria</taxon>
        <taxon>Vibrionales</taxon>
        <taxon>Vibrionaceae</taxon>
        <taxon>Vibrio</taxon>
    </lineage>
</organism>
<feature type="signal peptide" evidence="2">
    <location>
        <begin position="1"/>
        <end position="20"/>
    </location>
</feature>
<feature type="chain" id="PRO_0000009527" description="Flagellar P-ring protein 2">
    <location>
        <begin position="21"/>
        <end position="363"/>
    </location>
</feature>
<feature type="sequence conflict" description="In Ref. 1; AAD42919." evidence="3" ref="1">
    <original>L</original>
    <variation>F</variation>
    <location>
        <position position="329"/>
    </location>
</feature>
<accession>Q9X9J4</accession>
<proteinExistence type="inferred from homology"/>
<sequence length="363" mass="37901">MKRIVLLLMSVALFSTAAQAARIKDVAQVAGVRSNQLVGYGLVSGLPGTGEANPFTEQSFAAMLQNFGIQLPPGTKPKIKNVAAVMVTAELPPFSKPGQQVDVTVSSIGSAKSLRGGTLLQTFLKGLDGQVYAVAQGNLVVSGFSAEGADGSKIVGNNPTVGLISSGATVEREIPNPFGRGDYITFNLLESDFTTAQRMADAVNNFLGPQMASAVDATSVRVRAPRDVSQRVAFLSAIENLEFDPADGAAKIIVNSRTGTIVVGKHVRLKPAAVTHGGMTVAIKENLNVSQPNSFSGGQTVVVPDSDIEVTEEKGKMFKFEPGLTLDDLVRAVNEVGAAPSDLMAILQALKQAGAIEGQLIII</sequence>
<keyword id="KW-0975">Bacterial flagellum</keyword>
<keyword id="KW-0574">Periplasm</keyword>
<keyword id="KW-0732">Signal</keyword>
<comment type="function">
    <text evidence="1">Assembles around the rod to form the L-ring and probably protects the motor/basal body from shearing forces during rotation.</text>
</comment>
<comment type="subunit">
    <text evidence="1">The basal body constitutes a major portion of the flagellar organelle and consists of four rings (L,P,S, and M) mounted on a central rod.</text>
</comment>
<comment type="subcellular location">
    <subcellularLocation>
        <location evidence="1">Periplasm</location>
    </subcellularLocation>
    <subcellularLocation>
        <location evidence="1">Bacterial flagellum basal body</location>
    </subcellularLocation>
</comment>
<comment type="similarity">
    <text evidence="3">Belongs to the FlgI family.</text>
</comment>
<dbReference type="EMBL" id="U12817">
    <property type="protein sequence ID" value="AAD42919.1"/>
    <property type="molecule type" value="Genomic_DNA"/>
</dbReference>
<dbReference type="EMBL" id="BA000031">
    <property type="protein sequence ID" value="BAC59046.1"/>
    <property type="molecule type" value="Genomic_DNA"/>
</dbReference>
<dbReference type="RefSeq" id="NP_797162.1">
    <property type="nucleotide sequence ID" value="NC_004603.1"/>
</dbReference>
<dbReference type="RefSeq" id="WP_005454020.1">
    <property type="nucleotide sequence ID" value="NC_004603.1"/>
</dbReference>
<dbReference type="SMR" id="Q9X9J4"/>
<dbReference type="GeneID" id="1188280"/>
<dbReference type="KEGG" id="vpa:VP0783"/>
<dbReference type="PATRIC" id="fig|223926.6.peg.748"/>
<dbReference type="eggNOG" id="COG1706">
    <property type="taxonomic scope" value="Bacteria"/>
</dbReference>
<dbReference type="HOGENOM" id="CLU_045235_1_0_6"/>
<dbReference type="Proteomes" id="UP000002493">
    <property type="component" value="Chromosome 1"/>
</dbReference>
<dbReference type="GO" id="GO:0009428">
    <property type="term" value="C:bacterial-type flagellum basal body, distal rod, P ring"/>
    <property type="evidence" value="ECO:0007669"/>
    <property type="project" value="InterPro"/>
</dbReference>
<dbReference type="GO" id="GO:0030288">
    <property type="term" value="C:outer membrane-bounded periplasmic space"/>
    <property type="evidence" value="ECO:0007669"/>
    <property type="project" value="InterPro"/>
</dbReference>
<dbReference type="GO" id="GO:0005198">
    <property type="term" value="F:structural molecule activity"/>
    <property type="evidence" value="ECO:0007669"/>
    <property type="project" value="InterPro"/>
</dbReference>
<dbReference type="GO" id="GO:0071973">
    <property type="term" value="P:bacterial-type flagellum-dependent cell motility"/>
    <property type="evidence" value="ECO:0007669"/>
    <property type="project" value="InterPro"/>
</dbReference>
<dbReference type="HAMAP" id="MF_00416">
    <property type="entry name" value="FlgI"/>
    <property type="match status" value="1"/>
</dbReference>
<dbReference type="InterPro" id="IPR001782">
    <property type="entry name" value="Flag_FlgI"/>
</dbReference>
<dbReference type="NCBIfam" id="NF003676">
    <property type="entry name" value="PRK05303.1"/>
    <property type="match status" value="1"/>
</dbReference>
<dbReference type="PANTHER" id="PTHR30381">
    <property type="entry name" value="FLAGELLAR P-RING PERIPLASMIC PROTEIN FLGI"/>
    <property type="match status" value="1"/>
</dbReference>
<dbReference type="PANTHER" id="PTHR30381:SF0">
    <property type="entry name" value="FLAGELLAR P-RING PROTEIN"/>
    <property type="match status" value="1"/>
</dbReference>
<dbReference type="Pfam" id="PF02119">
    <property type="entry name" value="FlgI"/>
    <property type="match status" value="1"/>
</dbReference>
<dbReference type="PRINTS" id="PR01010">
    <property type="entry name" value="FLGPRINGFLGI"/>
</dbReference>
<reference key="1">
    <citation type="submission" date="1999-04" db="EMBL/GenBank/DDBJ databases">
        <title>Polar flagellar region I.</title>
        <authorList>
            <person name="McCarter L.L."/>
        </authorList>
    </citation>
    <scope>NUCLEOTIDE SEQUENCE [GENOMIC DNA]</scope>
    <source>
        <strain>BB22</strain>
    </source>
</reference>
<reference key="2">
    <citation type="journal article" date="2003" name="Lancet">
        <title>Genome sequence of Vibrio parahaemolyticus: a pathogenic mechanism distinct from that of V. cholerae.</title>
        <authorList>
            <person name="Makino K."/>
            <person name="Oshima K."/>
            <person name="Kurokawa K."/>
            <person name="Yokoyama K."/>
            <person name="Uda T."/>
            <person name="Tagomori K."/>
            <person name="Iijima Y."/>
            <person name="Najima M."/>
            <person name="Nakano M."/>
            <person name="Yamashita A."/>
            <person name="Kubota Y."/>
            <person name="Kimura S."/>
            <person name="Yasunaga T."/>
            <person name="Honda T."/>
            <person name="Shinagawa H."/>
            <person name="Hattori M."/>
            <person name="Iida T."/>
        </authorList>
    </citation>
    <scope>NUCLEOTIDE SEQUENCE [LARGE SCALE GENOMIC DNA]</scope>
    <source>
        <strain>RIMD 2210633</strain>
    </source>
</reference>